<feature type="chain" id="PRO_0000239931" description="Large ribosomal subunit protein uL16x">
    <location>
        <begin position="1"/>
        <end position="221"/>
    </location>
</feature>
<evidence type="ECO:0000250" key="1"/>
<evidence type="ECO:0000303" key="2">
    <source>
    </source>
</evidence>
<evidence type="ECO:0000305" key="3"/>
<keyword id="KW-1185">Reference proteome</keyword>
<keyword id="KW-0687">Ribonucleoprotein</keyword>
<keyword id="KW-0689">Ribosomal protein</keyword>
<protein>
    <recommendedName>
        <fullName evidence="2">Large ribosomal subunit protein uL16x</fullName>
    </recommendedName>
    <alternativeName>
        <fullName>60S ribosomal protein L10-3</fullName>
    </alternativeName>
</protein>
<accession>Q93W22</accession>
<accession>Q9C6H7</accession>
<dbReference type="EMBL" id="AC079285">
    <property type="protein sequence ID" value="AAG51174.1"/>
    <property type="status" value="ALT_SEQ"/>
    <property type="molecule type" value="Genomic_DNA"/>
</dbReference>
<dbReference type="EMBL" id="CP002684">
    <property type="protein sequence ID" value="AEE34531.1"/>
    <property type="molecule type" value="Genomic_DNA"/>
</dbReference>
<dbReference type="EMBL" id="AF367276">
    <property type="protein sequence ID" value="AAK56265.1"/>
    <property type="molecule type" value="mRNA"/>
</dbReference>
<dbReference type="EMBL" id="AY055103">
    <property type="protein sequence ID" value="AAL05903.1"/>
    <property type="molecule type" value="mRNA"/>
</dbReference>
<dbReference type="EMBL" id="AY087426">
    <property type="protein sequence ID" value="AAM64974.1"/>
    <property type="molecule type" value="mRNA"/>
</dbReference>
<dbReference type="PIR" id="F96691">
    <property type="entry name" value="F96691"/>
</dbReference>
<dbReference type="RefSeq" id="NP_564878.1">
    <property type="nucleotide sequence ID" value="NM_105329.2"/>
</dbReference>
<dbReference type="SMR" id="Q93W22"/>
<dbReference type="BioGRID" id="28197">
    <property type="interactions" value="133"/>
</dbReference>
<dbReference type="FunCoup" id="Q93W22">
    <property type="interactions" value="3321"/>
</dbReference>
<dbReference type="STRING" id="3702.Q93W22"/>
<dbReference type="iPTMnet" id="Q93W22"/>
<dbReference type="PaxDb" id="3702-AT1G66580.1"/>
<dbReference type="ProteomicsDB" id="226473"/>
<dbReference type="EnsemblPlants" id="AT1G66580.1">
    <property type="protein sequence ID" value="AT1G66580.1"/>
    <property type="gene ID" value="AT1G66580"/>
</dbReference>
<dbReference type="GeneID" id="842976"/>
<dbReference type="Gramene" id="AT1G66580.1">
    <property type="protein sequence ID" value="AT1G66580.1"/>
    <property type="gene ID" value="AT1G66580"/>
</dbReference>
<dbReference type="KEGG" id="ath:AT1G66580"/>
<dbReference type="Araport" id="AT1G66580"/>
<dbReference type="TAIR" id="AT1G66580">
    <property type="gene designation" value="SAG24"/>
</dbReference>
<dbReference type="eggNOG" id="KOG0857">
    <property type="taxonomic scope" value="Eukaryota"/>
</dbReference>
<dbReference type="HOGENOM" id="CLU_084051_0_0_1"/>
<dbReference type="InParanoid" id="Q93W22"/>
<dbReference type="OMA" id="HHVIREN"/>
<dbReference type="OrthoDB" id="10254888at2759"/>
<dbReference type="PhylomeDB" id="Q93W22"/>
<dbReference type="CD-CODE" id="4299E36E">
    <property type="entry name" value="Nucleolus"/>
</dbReference>
<dbReference type="PRO" id="PR:Q93W22"/>
<dbReference type="Proteomes" id="UP000006548">
    <property type="component" value="Chromosome 1"/>
</dbReference>
<dbReference type="ExpressionAtlas" id="Q93W22">
    <property type="expression patterns" value="baseline and differential"/>
</dbReference>
<dbReference type="GO" id="GO:0005737">
    <property type="term" value="C:cytoplasm"/>
    <property type="evidence" value="ECO:0000314"/>
    <property type="project" value="TAIR"/>
</dbReference>
<dbReference type="GO" id="GO:0022625">
    <property type="term" value="C:cytosolic large ribosomal subunit"/>
    <property type="evidence" value="ECO:0007005"/>
    <property type="project" value="TAIR"/>
</dbReference>
<dbReference type="GO" id="GO:0022626">
    <property type="term" value="C:cytosolic ribosome"/>
    <property type="evidence" value="ECO:0007005"/>
    <property type="project" value="TAIR"/>
</dbReference>
<dbReference type="GO" id="GO:0005739">
    <property type="term" value="C:mitochondrion"/>
    <property type="evidence" value="ECO:0007005"/>
    <property type="project" value="TAIR"/>
</dbReference>
<dbReference type="GO" id="GO:0005634">
    <property type="term" value="C:nucleus"/>
    <property type="evidence" value="ECO:0000314"/>
    <property type="project" value="TAIR"/>
</dbReference>
<dbReference type="GO" id="GO:0000325">
    <property type="term" value="C:plant-type vacuole"/>
    <property type="evidence" value="ECO:0007005"/>
    <property type="project" value="TAIR"/>
</dbReference>
<dbReference type="GO" id="GO:0005840">
    <property type="term" value="C:ribosome"/>
    <property type="evidence" value="ECO:0000353"/>
    <property type="project" value="TAIR"/>
</dbReference>
<dbReference type="GO" id="GO:0005773">
    <property type="term" value="C:vacuole"/>
    <property type="evidence" value="ECO:0007005"/>
    <property type="project" value="TAIR"/>
</dbReference>
<dbReference type="GO" id="GO:0003729">
    <property type="term" value="F:mRNA binding"/>
    <property type="evidence" value="ECO:0000314"/>
    <property type="project" value="TAIR"/>
</dbReference>
<dbReference type="GO" id="GO:0003735">
    <property type="term" value="F:structural constituent of ribosome"/>
    <property type="evidence" value="ECO:0000314"/>
    <property type="project" value="CAFA"/>
</dbReference>
<dbReference type="GO" id="GO:0032502">
    <property type="term" value="P:developmental process"/>
    <property type="evidence" value="ECO:0000315"/>
    <property type="project" value="TAIR"/>
</dbReference>
<dbReference type="GO" id="GO:0010224">
    <property type="term" value="P:response to UV-B"/>
    <property type="evidence" value="ECO:0000270"/>
    <property type="project" value="TAIR"/>
</dbReference>
<dbReference type="GO" id="GO:0006412">
    <property type="term" value="P:translation"/>
    <property type="evidence" value="ECO:0007669"/>
    <property type="project" value="InterPro"/>
</dbReference>
<dbReference type="CDD" id="cd01433">
    <property type="entry name" value="Ribosomal_L16_L10e"/>
    <property type="match status" value="1"/>
</dbReference>
<dbReference type="FunFam" id="3.90.1170.10:FF:000002">
    <property type="entry name" value="60S ribosomal protein L10"/>
    <property type="match status" value="1"/>
</dbReference>
<dbReference type="Gene3D" id="3.90.1170.10">
    <property type="entry name" value="Ribosomal protein L10e/L16"/>
    <property type="match status" value="1"/>
</dbReference>
<dbReference type="InterPro" id="IPR047873">
    <property type="entry name" value="Ribosomal_uL16"/>
</dbReference>
<dbReference type="InterPro" id="IPR018255">
    <property type="entry name" value="Ribosomal_uL16_CS_euk_arc"/>
</dbReference>
<dbReference type="InterPro" id="IPR016180">
    <property type="entry name" value="Ribosomal_uL16_dom"/>
</dbReference>
<dbReference type="InterPro" id="IPR001197">
    <property type="entry name" value="Ribosomal_uL16_euk_arch"/>
</dbReference>
<dbReference type="InterPro" id="IPR036920">
    <property type="entry name" value="Ribosomal_uL16_sf"/>
</dbReference>
<dbReference type="NCBIfam" id="NF003239">
    <property type="entry name" value="PRK04199.1-4"/>
    <property type="match status" value="1"/>
</dbReference>
<dbReference type="NCBIfam" id="TIGR00279">
    <property type="entry name" value="uL16_euk_arch"/>
    <property type="match status" value="1"/>
</dbReference>
<dbReference type="PANTHER" id="PTHR11726">
    <property type="entry name" value="60S RIBOSOMAL PROTEIN L10"/>
    <property type="match status" value="1"/>
</dbReference>
<dbReference type="Pfam" id="PF00252">
    <property type="entry name" value="Ribosomal_L16"/>
    <property type="match status" value="1"/>
</dbReference>
<dbReference type="PIRSF" id="PIRSF005590">
    <property type="entry name" value="Ribosomal_L10"/>
    <property type="match status" value="1"/>
</dbReference>
<dbReference type="SUPFAM" id="SSF54686">
    <property type="entry name" value="Ribosomal protein L16p/L10e"/>
    <property type="match status" value="1"/>
</dbReference>
<dbReference type="PROSITE" id="PS01257">
    <property type="entry name" value="RIBOSOMAL_L10E"/>
    <property type="match status" value="1"/>
</dbReference>
<comment type="subunit">
    <text evidence="1">Component of the small ribosomal subunit. Mature ribosomes consist of a small (40S) and a large (60S) subunit. The 40S subunit contains about 33 different proteins and 1 molecule of RNA (18S). The 60S subunit contains about 49 different proteins and 3 molecules of RNA (25S, 5.8S and 5S) (By similarity).</text>
</comment>
<comment type="similarity">
    <text evidence="3">Belongs to the universal ribosomal protein uL16 family.</text>
</comment>
<comment type="sequence caution" evidence="3">
    <conflict type="erroneous gene model prediction">
        <sequence resource="EMBL-CDS" id="AAG51174"/>
    </conflict>
</comment>
<gene>
    <name type="primary">RPL10C</name>
    <name type="ordered locus">At1g66580</name>
    <name type="ORF">T12I7.3</name>
</gene>
<reference key="1">
    <citation type="journal article" date="2000" name="Nature">
        <title>Sequence and analysis of chromosome 1 of the plant Arabidopsis thaliana.</title>
        <authorList>
            <person name="Theologis A."/>
            <person name="Ecker J.R."/>
            <person name="Palm C.J."/>
            <person name="Federspiel N.A."/>
            <person name="Kaul S."/>
            <person name="White O."/>
            <person name="Alonso J."/>
            <person name="Altafi H."/>
            <person name="Araujo R."/>
            <person name="Bowman C.L."/>
            <person name="Brooks S.Y."/>
            <person name="Buehler E."/>
            <person name="Chan A."/>
            <person name="Chao Q."/>
            <person name="Chen H."/>
            <person name="Cheuk R.F."/>
            <person name="Chin C.W."/>
            <person name="Chung M.K."/>
            <person name="Conn L."/>
            <person name="Conway A.B."/>
            <person name="Conway A.R."/>
            <person name="Creasy T.H."/>
            <person name="Dewar K."/>
            <person name="Dunn P."/>
            <person name="Etgu P."/>
            <person name="Feldblyum T.V."/>
            <person name="Feng J.-D."/>
            <person name="Fong B."/>
            <person name="Fujii C.Y."/>
            <person name="Gill J.E."/>
            <person name="Goldsmith A.D."/>
            <person name="Haas B."/>
            <person name="Hansen N.F."/>
            <person name="Hughes B."/>
            <person name="Huizar L."/>
            <person name="Hunter J.L."/>
            <person name="Jenkins J."/>
            <person name="Johnson-Hopson C."/>
            <person name="Khan S."/>
            <person name="Khaykin E."/>
            <person name="Kim C.J."/>
            <person name="Koo H.L."/>
            <person name="Kremenetskaia I."/>
            <person name="Kurtz D.B."/>
            <person name="Kwan A."/>
            <person name="Lam B."/>
            <person name="Langin-Hooper S."/>
            <person name="Lee A."/>
            <person name="Lee J.M."/>
            <person name="Lenz C.A."/>
            <person name="Li J.H."/>
            <person name="Li Y.-P."/>
            <person name="Lin X."/>
            <person name="Liu S.X."/>
            <person name="Liu Z.A."/>
            <person name="Luros J.S."/>
            <person name="Maiti R."/>
            <person name="Marziali A."/>
            <person name="Militscher J."/>
            <person name="Miranda M."/>
            <person name="Nguyen M."/>
            <person name="Nierman W.C."/>
            <person name="Osborne B.I."/>
            <person name="Pai G."/>
            <person name="Peterson J."/>
            <person name="Pham P.K."/>
            <person name="Rizzo M."/>
            <person name="Rooney T."/>
            <person name="Rowley D."/>
            <person name="Sakano H."/>
            <person name="Salzberg S.L."/>
            <person name="Schwartz J.R."/>
            <person name="Shinn P."/>
            <person name="Southwick A.M."/>
            <person name="Sun H."/>
            <person name="Tallon L.J."/>
            <person name="Tambunga G."/>
            <person name="Toriumi M.J."/>
            <person name="Town C.D."/>
            <person name="Utterback T."/>
            <person name="Van Aken S."/>
            <person name="Vaysberg M."/>
            <person name="Vysotskaia V.S."/>
            <person name="Walker M."/>
            <person name="Wu D."/>
            <person name="Yu G."/>
            <person name="Fraser C.M."/>
            <person name="Venter J.C."/>
            <person name="Davis R.W."/>
        </authorList>
    </citation>
    <scope>NUCLEOTIDE SEQUENCE [LARGE SCALE GENOMIC DNA]</scope>
    <source>
        <strain>cv. Columbia</strain>
    </source>
</reference>
<reference key="2">
    <citation type="journal article" date="2017" name="Plant J.">
        <title>Araport11: a complete reannotation of the Arabidopsis thaliana reference genome.</title>
        <authorList>
            <person name="Cheng C.Y."/>
            <person name="Krishnakumar V."/>
            <person name="Chan A.P."/>
            <person name="Thibaud-Nissen F."/>
            <person name="Schobel S."/>
            <person name="Town C.D."/>
        </authorList>
    </citation>
    <scope>GENOME REANNOTATION</scope>
    <source>
        <strain>cv. Columbia</strain>
    </source>
</reference>
<reference key="3">
    <citation type="journal article" date="2003" name="Science">
        <title>Empirical analysis of transcriptional activity in the Arabidopsis genome.</title>
        <authorList>
            <person name="Yamada K."/>
            <person name="Lim J."/>
            <person name="Dale J.M."/>
            <person name="Chen H."/>
            <person name="Shinn P."/>
            <person name="Palm C.J."/>
            <person name="Southwick A.M."/>
            <person name="Wu H.C."/>
            <person name="Kim C.J."/>
            <person name="Nguyen M."/>
            <person name="Pham P.K."/>
            <person name="Cheuk R.F."/>
            <person name="Karlin-Newmann G."/>
            <person name="Liu S.X."/>
            <person name="Lam B."/>
            <person name="Sakano H."/>
            <person name="Wu T."/>
            <person name="Yu G."/>
            <person name="Miranda M."/>
            <person name="Quach H.L."/>
            <person name="Tripp M."/>
            <person name="Chang C.H."/>
            <person name="Lee J.M."/>
            <person name="Toriumi M.J."/>
            <person name="Chan M.M."/>
            <person name="Tang C.C."/>
            <person name="Onodera C.S."/>
            <person name="Deng J.M."/>
            <person name="Akiyama K."/>
            <person name="Ansari Y."/>
            <person name="Arakawa T."/>
            <person name="Banh J."/>
            <person name="Banno F."/>
            <person name="Bowser L."/>
            <person name="Brooks S.Y."/>
            <person name="Carninci P."/>
            <person name="Chao Q."/>
            <person name="Choy N."/>
            <person name="Enju A."/>
            <person name="Goldsmith A.D."/>
            <person name="Gurjal M."/>
            <person name="Hansen N.F."/>
            <person name="Hayashizaki Y."/>
            <person name="Johnson-Hopson C."/>
            <person name="Hsuan V.W."/>
            <person name="Iida K."/>
            <person name="Karnes M."/>
            <person name="Khan S."/>
            <person name="Koesema E."/>
            <person name="Ishida J."/>
            <person name="Jiang P.X."/>
            <person name="Jones T."/>
            <person name="Kawai J."/>
            <person name="Kamiya A."/>
            <person name="Meyers C."/>
            <person name="Nakajima M."/>
            <person name="Narusaka M."/>
            <person name="Seki M."/>
            <person name="Sakurai T."/>
            <person name="Satou M."/>
            <person name="Tamse R."/>
            <person name="Vaysberg M."/>
            <person name="Wallender E.K."/>
            <person name="Wong C."/>
            <person name="Yamamura Y."/>
            <person name="Yuan S."/>
            <person name="Shinozaki K."/>
            <person name="Davis R.W."/>
            <person name="Theologis A."/>
            <person name="Ecker J.R."/>
        </authorList>
    </citation>
    <scope>NUCLEOTIDE SEQUENCE [LARGE SCALE MRNA]</scope>
    <source>
        <strain>cv. Columbia</strain>
    </source>
</reference>
<reference key="4">
    <citation type="submission" date="2002-03" db="EMBL/GenBank/DDBJ databases">
        <title>Full-length cDNA from Arabidopsis thaliana.</title>
        <authorList>
            <person name="Brover V.V."/>
            <person name="Troukhan M.E."/>
            <person name="Alexandrov N.A."/>
            <person name="Lu Y.-P."/>
            <person name="Flavell R.B."/>
            <person name="Feldmann K.A."/>
        </authorList>
    </citation>
    <scope>NUCLEOTIDE SEQUENCE [LARGE SCALE MRNA]</scope>
</reference>
<reference key="5">
    <citation type="journal article" date="2001" name="Plant Physiol.">
        <title>The organization of cytoplasmic ribosomal protein genes in the Arabidopsis genome.</title>
        <authorList>
            <person name="Barakat A."/>
            <person name="Szick-Miranda K."/>
            <person name="Chang I.-F."/>
            <person name="Guyot R."/>
            <person name="Blanc G."/>
            <person name="Cooke R."/>
            <person name="Delseny M."/>
            <person name="Bailey-Serres J."/>
        </authorList>
    </citation>
    <scope>GENE FAMILY ORGANIZATION</scope>
    <scope>NOMENCLATURE</scope>
</reference>
<reference key="6">
    <citation type="journal article" date="2023" name="Plant Cell">
        <title>An updated nomenclature for plant ribosomal protein genes.</title>
        <authorList>
            <person name="Scarpin M.R."/>
            <person name="Busche M."/>
            <person name="Martinez R.E."/>
            <person name="Harper L.C."/>
            <person name="Reiser L."/>
            <person name="Szakonyi D."/>
            <person name="Merchante C."/>
            <person name="Lan T."/>
            <person name="Xiong W."/>
            <person name="Mo B."/>
            <person name="Tang G."/>
            <person name="Chen X."/>
            <person name="Bailey-Serres J."/>
            <person name="Browning K.S."/>
            <person name="Brunkard J.O."/>
        </authorList>
    </citation>
    <scope>NOMENCLATURE</scope>
</reference>
<name>RL103_ARATH</name>
<proteinExistence type="evidence at transcript level"/>
<sequence length="221" mass="24929">MGRRPARCYRQIKGKPYPKSRYCRGVPDPKIRIYDVGMKRKGVDEFPFCVHLVSWEKENVSSEALEAARIACNKYMVKSAGKDAFHLRIRVHPFHVLRINKMLSCAGADRLQTGMRGAFGKALGTCARVAIGQVLLSVRCKDNHGVHAQEALRRAKFKFPGRQKIIVSRKWGFTKFNRAEYTKLRAMKRIVPDGVNAKFLSNHGPLANRQPGSAFISATSE</sequence>
<organism>
    <name type="scientific">Arabidopsis thaliana</name>
    <name type="common">Mouse-ear cress</name>
    <dbReference type="NCBI Taxonomy" id="3702"/>
    <lineage>
        <taxon>Eukaryota</taxon>
        <taxon>Viridiplantae</taxon>
        <taxon>Streptophyta</taxon>
        <taxon>Embryophyta</taxon>
        <taxon>Tracheophyta</taxon>
        <taxon>Spermatophyta</taxon>
        <taxon>Magnoliopsida</taxon>
        <taxon>eudicotyledons</taxon>
        <taxon>Gunneridae</taxon>
        <taxon>Pentapetalae</taxon>
        <taxon>rosids</taxon>
        <taxon>malvids</taxon>
        <taxon>Brassicales</taxon>
        <taxon>Brassicaceae</taxon>
        <taxon>Camelineae</taxon>
        <taxon>Arabidopsis</taxon>
    </lineage>
</organism>